<dbReference type="EC" id="3.4.11.18" evidence="1"/>
<dbReference type="EMBL" id="AE014075">
    <property type="protein sequence ID" value="AAN78697.1"/>
    <property type="molecule type" value="Genomic_DNA"/>
</dbReference>
<dbReference type="RefSeq" id="WP_001018194.1">
    <property type="nucleotide sequence ID" value="NZ_CP051263.1"/>
</dbReference>
<dbReference type="SMR" id="P0AE19"/>
<dbReference type="STRING" id="199310.c0203"/>
<dbReference type="MEROPS" id="M24.001"/>
<dbReference type="GeneID" id="93777257"/>
<dbReference type="KEGG" id="ecc:c0203"/>
<dbReference type="eggNOG" id="COG0024">
    <property type="taxonomic scope" value="Bacteria"/>
</dbReference>
<dbReference type="HOGENOM" id="CLU_015857_0_0_6"/>
<dbReference type="BioCyc" id="ECOL199310:C0203-MONOMER"/>
<dbReference type="Proteomes" id="UP000001410">
    <property type="component" value="Chromosome"/>
</dbReference>
<dbReference type="GO" id="GO:0005829">
    <property type="term" value="C:cytosol"/>
    <property type="evidence" value="ECO:0007669"/>
    <property type="project" value="TreeGrafter"/>
</dbReference>
<dbReference type="GO" id="GO:0004239">
    <property type="term" value="F:initiator methionyl aminopeptidase activity"/>
    <property type="evidence" value="ECO:0007669"/>
    <property type="project" value="UniProtKB-UniRule"/>
</dbReference>
<dbReference type="GO" id="GO:0046872">
    <property type="term" value="F:metal ion binding"/>
    <property type="evidence" value="ECO:0007669"/>
    <property type="project" value="UniProtKB-UniRule"/>
</dbReference>
<dbReference type="GO" id="GO:0070006">
    <property type="term" value="F:metalloaminopeptidase activity"/>
    <property type="evidence" value="ECO:0007669"/>
    <property type="project" value="UniProtKB-UniRule"/>
</dbReference>
<dbReference type="GO" id="GO:0006508">
    <property type="term" value="P:proteolysis"/>
    <property type="evidence" value="ECO:0007669"/>
    <property type="project" value="UniProtKB-KW"/>
</dbReference>
<dbReference type="CDD" id="cd01086">
    <property type="entry name" value="MetAP1"/>
    <property type="match status" value="1"/>
</dbReference>
<dbReference type="FunFam" id="3.90.230.10:FF:000001">
    <property type="entry name" value="Methionine aminopeptidase"/>
    <property type="match status" value="1"/>
</dbReference>
<dbReference type="Gene3D" id="3.90.230.10">
    <property type="entry name" value="Creatinase/methionine aminopeptidase superfamily"/>
    <property type="match status" value="1"/>
</dbReference>
<dbReference type="HAMAP" id="MF_01974">
    <property type="entry name" value="MetAP_1"/>
    <property type="match status" value="1"/>
</dbReference>
<dbReference type="InterPro" id="IPR036005">
    <property type="entry name" value="Creatinase/aminopeptidase-like"/>
</dbReference>
<dbReference type="InterPro" id="IPR000994">
    <property type="entry name" value="Pept_M24"/>
</dbReference>
<dbReference type="InterPro" id="IPR001714">
    <property type="entry name" value="Pept_M24_MAP"/>
</dbReference>
<dbReference type="InterPro" id="IPR002467">
    <property type="entry name" value="Pept_M24A_MAP1"/>
</dbReference>
<dbReference type="NCBIfam" id="TIGR00500">
    <property type="entry name" value="met_pdase_I"/>
    <property type="match status" value="1"/>
</dbReference>
<dbReference type="PANTHER" id="PTHR43330">
    <property type="entry name" value="METHIONINE AMINOPEPTIDASE"/>
    <property type="match status" value="1"/>
</dbReference>
<dbReference type="PANTHER" id="PTHR43330:SF27">
    <property type="entry name" value="METHIONINE AMINOPEPTIDASE"/>
    <property type="match status" value="1"/>
</dbReference>
<dbReference type="Pfam" id="PF00557">
    <property type="entry name" value="Peptidase_M24"/>
    <property type="match status" value="1"/>
</dbReference>
<dbReference type="PRINTS" id="PR00599">
    <property type="entry name" value="MAPEPTIDASE"/>
</dbReference>
<dbReference type="SUPFAM" id="SSF55920">
    <property type="entry name" value="Creatinase/aminopeptidase"/>
    <property type="match status" value="1"/>
</dbReference>
<dbReference type="PROSITE" id="PS00680">
    <property type="entry name" value="MAP_1"/>
    <property type="match status" value="1"/>
</dbReference>
<protein>
    <recommendedName>
        <fullName evidence="1">Methionine aminopeptidase</fullName>
        <shortName evidence="1">MAP</shortName>
        <shortName evidence="1">MetAP</shortName>
        <ecNumber evidence="1">3.4.11.18</ecNumber>
    </recommendedName>
    <alternativeName>
        <fullName evidence="1">Peptidase M</fullName>
    </alternativeName>
</protein>
<sequence length="264" mass="29331">MAISIKTPEDIEKMRVAGRLAAEVLEMIEPYVKPGVSTGELDRICNDYIVNEQHAVSACLGYHGYPKSVCISINEVVCHGIPDDAKLLKDGDIVNIDVTVIKDGFHGDTSKMFIVGKPTIMGERLCRITQESLYLALRMVKPGINLREIGAAIQKFVEAEGFSVVREYCGHGIGRGFHEEPQVLHYDSRETNVVLKPGMTFTIEPMVNAGKKEIRTMKDGWTVKTKDRSLSAQYEHTIVVTDNGCEILTLRKDDTIPAIISHDE</sequence>
<reference key="1">
    <citation type="journal article" date="2002" name="Proc. Natl. Acad. Sci. U.S.A.">
        <title>Extensive mosaic structure revealed by the complete genome sequence of uropathogenic Escherichia coli.</title>
        <authorList>
            <person name="Welch R.A."/>
            <person name="Burland V."/>
            <person name="Plunkett G. III"/>
            <person name="Redford P."/>
            <person name="Roesch P."/>
            <person name="Rasko D."/>
            <person name="Buckles E.L."/>
            <person name="Liou S.-R."/>
            <person name="Boutin A."/>
            <person name="Hackett J."/>
            <person name="Stroud D."/>
            <person name="Mayhew G.F."/>
            <person name="Rose D.J."/>
            <person name="Zhou S."/>
            <person name="Schwartz D.C."/>
            <person name="Perna N.T."/>
            <person name="Mobley H.L.T."/>
            <person name="Donnenberg M.S."/>
            <person name="Blattner F.R."/>
        </authorList>
    </citation>
    <scope>NUCLEOTIDE SEQUENCE [LARGE SCALE GENOMIC DNA]</scope>
    <source>
        <strain>CFT073 / ATCC 700928 / UPEC</strain>
    </source>
</reference>
<feature type="chain" id="PRO_0000148939" description="Methionine aminopeptidase">
    <location>
        <begin position="1"/>
        <end position="264"/>
    </location>
</feature>
<feature type="binding site" evidence="1">
    <location>
        <position position="79"/>
    </location>
    <ligand>
        <name>substrate</name>
    </ligand>
</feature>
<feature type="binding site" evidence="1">
    <location>
        <position position="97"/>
    </location>
    <ligand>
        <name>a divalent metal cation</name>
        <dbReference type="ChEBI" id="CHEBI:60240"/>
        <label>1</label>
    </ligand>
</feature>
<feature type="binding site" evidence="1">
    <location>
        <position position="108"/>
    </location>
    <ligand>
        <name>a divalent metal cation</name>
        <dbReference type="ChEBI" id="CHEBI:60240"/>
        <label>1</label>
    </ligand>
</feature>
<feature type="binding site" evidence="1">
    <location>
        <position position="108"/>
    </location>
    <ligand>
        <name>a divalent metal cation</name>
        <dbReference type="ChEBI" id="CHEBI:60240"/>
        <label>2</label>
        <note>catalytic</note>
    </ligand>
</feature>
<feature type="binding site" evidence="1">
    <location>
        <position position="171"/>
    </location>
    <ligand>
        <name>a divalent metal cation</name>
        <dbReference type="ChEBI" id="CHEBI:60240"/>
        <label>2</label>
        <note>catalytic</note>
    </ligand>
</feature>
<feature type="binding site" evidence="1">
    <location>
        <position position="178"/>
    </location>
    <ligand>
        <name>substrate</name>
    </ligand>
</feature>
<feature type="binding site" evidence="1">
    <location>
        <position position="204"/>
    </location>
    <ligand>
        <name>a divalent metal cation</name>
        <dbReference type="ChEBI" id="CHEBI:60240"/>
        <label>2</label>
        <note>catalytic</note>
    </ligand>
</feature>
<feature type="binding site" evidence="1">
    <location>
        <position position="235"/>
    </location>
    <ligand>
        <name>a divalent metal cation</name>
        <dbReference type="ChEBI" id="CHEBI:60240"/>
        <label>1</label>
    </ligand>
</feature>
<feature type="binding site" evidence="1">
    <location>
        <position position="235"/>
    </location>
    <ligand>
        <name>a divalent metal cation</name>
        <dbReference type="ChEBI" id="CHEBI:60240"/>
        <label>2</label>
        <note>catalytic</note>
    </ligand>
</feature>
<comment type="function">
    <text evidence="1">Removes the N-terminal methionine from nascent proteins. The N-terminal methionine is often cleaved when the second residue in the primary sequence is small and uncharged (Met-Ala-, Cys, Gly, Pro, Ser, Thr, or Val). Requires deformylation of the N(alpha)-formylated initiator methionine before it can be hydrolyzed.</text>
</comment>
<comment type="catalytic activity">
    <reaction evidence="1">
        <text>Release of N-terminal amino acids, preferentially methionine, from peptides and arylamides.</text>
        <dbReference type="EC" id="3.4.11.18"/>
    </reaction>
</comment>
<comment type="cofactor">
    <cofactor evidence="1">
        <name>Co(2+)</name>
        <dbReference type="ChEBI" id="CHEBI:48828"/>
    </cofactor>
    <cofactor evidence="1">
        <name>Zn(2+)</name>
        <dbReference type="ChEBI" id="CHEBI:29105"/>
    </cofactor>
    <cofactor evidence="1">
        <name>Mn(2+)</name>
        <dbReference type="ChEBI" id="CHEBI:29035"/>
    </cofactor>
    <cofactor evidence="1">
        <name>Fe(2+)</name>
        <dbReference type="ChEBI" id="CHEBI:29033"/>
    </cofactor>
    <text evidence="1">Binds 2 divalent metal cations per subunit. Has a high-affinity and a low affinity metal-binding site. The true nature of the physiological cofactor is under debate. The enzyme is active with cobalt, zinc, manganese or divalent iron ions. Most likely, methionine aminopeptidases function as mononuclear Fe(2+)-metalloproteases under physiological conditions, and the catalytically relevant metal-binding site has been assigned to the histidine-containing high-affinity site.</text>
</comment>
<comment type="subunit">
    <text evidence="1">Monomer.</text>
</comment>
<comment type="similarity">
    <text evidence="1">Belongs to the peptidase M24A family. Methionine aminopeptidase type 1 subfamily.</text>
</comment>
<proteinExistence type="inferred from homology"/>
<keyword id="KW-0031">Aminopeptidase</keyword>
<keyword id="KW-0378">Hydrolase</keyword>
<keyword id="KW-0479">Metal-binding</keyword>
<keyword id="KW-0645">Protease</keyword>
<keyword id="KW-1185">Reference proteome</keyword>
<name>MAP1_ECOL6</name>
<organism>
    <name type="scientific">Escherichia coli O6:H1 (strain CFT073 / ATCC 700928 / UPEC)</name>
    <dbReference type="NCBI Taxonomy" id="199310"/>
    <lineage>
        <taxon>Bacteria</taxon>
        <taxon>Pseudomonadati</taxon>
        <taxon>Pseudomonadota</taxon>
        <taxon>Gammaproteobacteria</taxon>
        <taxon>Enterobacterales</taxon>
        <taxon>Enterobacteriaceae</taxon>
        <taxon>Escherichia</taxon>
    </lineage>
</organism>
<evidence type="ECO:0000255" key="1">
    <source>
        <dbReference type="HAMAP-Rule" id="MF_01974"/>
    </source>
</evidence>
<gene>
    <name evidence="1" type="primary">map</name>
    <name type="ordered locus">c0203</name>
</gene>
<accession>P0AE19</accession>
<accession>P07906</accession>